<dbReference type="EC" id="6.1.1.21" evidence="1"/>
<dbReference type="EMBL" id="AE017224">
    <property type="protein sequence ID" value="AAX75626.1"/>
    <property type="molecule type" value="Genomic_DNA"/>
</dbReference>
<dbReference type="RefSeq" id="WP_002968826.1">
    <property type="nucleotide sequence ID" value="NC_006933.1"/>
</dbReference>
<dbReference type="SMR" id="Q579Q8"/>
<dbReference type="EnsemblBacteria" id="AAX75626">
    <property type="protein sequence ID" value="AAX75626"/>
    <property type="gene ID" value="BruAb2_0182"/>
</dbReference>
<dbReference type="GeneID" id="93015856"/>
<dbReference type="KEGG" id="bmb:BruAb2_0182"/>
<dbReference type="HOGENOM" id="CLU_025113_3_2_5"/>
<dbReference type="Proteomes" id="UP000000540">
    <property type="component" value="Chromosome II"/>
</dbReference>
<dbReference type="GO" id="GO:0005737">
    <property type="term" value="C:cytoplasm"/>
    <property type="evidence" value="ECO:0007669"/>
    <property type="project" value="UniProtKB-SubCell"/>
</dbReference>
<dbReference type="GO" id="GO:0005524">
    <property type="term" value="F:ATP binding"/>
    <property type="evidence" value="ECO:0007669"/>
    <property type="project" value="UniProtKB-UniRule"/>
</dbReference>
<dbReference type="GO" id="GO:0004821">
    <property type="term" value="F:histidine-tRNA ligase activity"/>
    <property type="evidence" value="ECO:0007669"/>
    <property type="project" value="UniProtKB-UniRule"/>
</dbReference>
<dbReference type="GO" id="GO:0006427">
    <property type="term" value="P:histidyl-tRNA aminoacylation"/>
    <property type="evidence" value="ECO:0007669"/>
    <property type="project" value="UniProtKB-UniRule"/>
</dbReference>
<dbReference type="CDD" id="cd00773">
    <property type="entry name" value="HisRS-like_core"/>
    <property type="match status" value="1"/>
</dbReference>
<dbReference type="CDD" id="cd00859">
    <property type="entry name" value="HisRS_anticodon"/>
    <property type="match status" value="1"/>
</dbReference>
<dbReference type="Gene3D" id="3.40.50.800">
    <property type="entry name" value="Anticodon-binding domain"/>
    <property type="match status" value="1"/>
</dbReference>
<dbReference type="Gene3D" id="3.30.930.10">
    <property type="entry name" value="Bira Bifunctional Protein, Domain 2"/>
    <property type="match status" value="1"/>
</dbReference>
<dbReference type="HAMAP" id="MF_00127">
    <property type="entry name" value="His_tRNA_synth"/>
    <property type="match status" value="1"/>
</dbReference>
<dbReference type="InterPro" id="IPR006195">
    <property type="entry name" value="aa-tRNA-synth_II"/>
</dbReference>
<dbReference type="InterPro" id="IPR045864">
    <property type="entry name" value="aa-tRNA-synth_II/BPL/LPL"/>
</dbReference>
<dbReference type="InterPro" id="IPR004154">
    <property type="entry name" value="Anticodon-bd"/>
</dbReference>
<dbReference type="InterPro" id="IPR036621">
    <property type="entry name" value="Anticodon-bd_dom_sf"/>
</dbReference>
<dbReference type="InterPro" id="IPR015807">
    <property type="entry name" value="His-tRNA-ligase"/>
</dbReference>
<dbReference type="InterPro" id="IPR041715">
    <property type="entry name" value="HisRS-like_core"/>
</dbReference>
<dbReference type="InterPro" id="IPR004516">
    <property type="entry name" value="HisRS/HisZ"/>
</dbReference>
<dbReference type="InterPro" id="IPR033656">
    <property type="entry name" value="HisRS_anticodon"/>
</dbReference>
<dbReference type="NCBIfam" id="TIGR00442">
    <property type="entry name" value="hisS"/>
    <property type="match status" value="1"/>
</dbReference>
<dbReference type="PANTHER" id="PTHR11476:SF7">
    <property type="entry name" value="HISTIDINE--TRNA LIGASE"/>
    <property type="match status" value="1"/>
</dbReference>
<dbReference type="PANTHER" id="PTHR11476">
    <property type="entry name" value="HISTIDYL-TRNA SYNTHETASE"/>
    <property type="match status" value="1"/>
</dbReference>
<dbReference type="Pfam" id="PF03129">
    <property type="entry name" value="HGTP_anticodon"/>
    <property type="match status" value="1"/>
</dbReference>
<dbReference type="Pfam" id="PF13393">
    <property type="entry name" value="tRNA-synt_His"/>
    <property type="match status" value="1"/>
</dbReference>
<dbReference type="PIRSF" id="PIRSF001549">
    <property type="entry name" value="His-tRNA_synth"/>
    <property type="match status" value="1"/>
</dbReference>
<dbReference type="SUPFAM" id="SSF52954">
    <property type="entry name" value="Class II aaRS ABD-related"/>
    <property type="match status" value="1"/>
</dbReference>
<dbReference type="SUPFAM" id="SSF55681">
    <property type="entry name" value="Class II aaRS and biotin synthetases"/>
    <property type="match status" value="1"/>
</dbReference>
<dbReference type="PROSITE" id="PS50862">
    <property type="entry name" value="AA_TRNA_LIGASE_II"/>
    <property type="match status" value="1"/>
</dbReference>
<reference key="1">
    <citation type="journal article" date="2005" name="J. Bacteriol.">
        <title>Completion of the genome sequence of Brucella abortus and comparison to the highly similar genomes of Brucella melitensis and Brucella suis.</title>
        <authorList>
            <person name="Halling S.M."/>
            <person name="Peterson-Burch B.D."/>
            <person name="Bricker B.J."/>
            <person name="Zuerner R.L."/>
            <person name="Qing Z."/>
            <person name="Li L.-L."/>
            <person name="Kapur V."/>
            <person name="Alt D.P."/>
            <person name="Olsen S.C."/>
        </authorList>
    </citation>
    <scope>NUCLEOTIDE SEQUENCE [LARGE SCALE GENOMIC DNA]</scope>
    <source>
        <strain>9-941</strain>
    </source>
</reference>
<organism>
    <name type="scientific">Brucella abortus biovar 1 (strain 9-941)</name>
    <dbReference type="NCBI Taxonomy" id="262698"/>
    <lineage>
        <taxon>Bacteria</taxon>
        <taxon>Pseudomonadati</taxon>
        <taxon>Pseudomonadota</taxon>
        <taxon>Alphaproteobacteria</taxon>
        <taxon>Hyphomicrobiales</taxon>
        <taxon>Brucellaceae</taxon>
        <taxon>Brucella/Ochrobactrum group</taxon>
        <taxon>Brucella</taxon>
    </lineage>
</organism>
<evidence type="ECO:0000255" key="1">
    <source>
        <dbReference type="HAMAP-Rule" id="MF_00127"/>
    </source>
</evidence>
<name>SYH_BRUAB</name>
<protein>
    <recommendedName>
        <fullName evidence="1">Histidine--tRNA ligase</fullName>
        <ecNumber evidence="1">6.1.1.21</ecNumber>
    </recommendedName>
    <alternativeName>
        <fullName evidence="1">Histidyl-tRNA synthetase</fullName>
        <shortName evidence="1">HisRS</shortName>
    </alternativeName>
</protein>
<accession>Q579Q8</accession>
<gene>
    <name evidence="1" type="primary">hisS</name>
    <name type="ordered locus">BruAb2_0182</name>
</gene>
<feature type="chain" id="PRO_0000136123" description="Histidine--tRNA ligase">
    <location>
        <begin position="1"/>
        <end position="502"/>
    </location>
</feature>
<keyword id="KW-0030">Aminoacyl-tRNA synthetase</keyword>
<keyword id="KW-0067">ATP-binding</keyword>
<keyword id="KW-0963">Cytoplasm</keyword>
<keyword id="KW-0436">Ligase</keyword>
<keyword id="KW-0547">Nucleotide-binding</keyword>
<keyword id="KW-0648">Protein biosynthesis</keyword>
<sequence>MADKADKMKARLPRGFVDRVPDDLRAAEKMMATIREVYDLYGFEPVETPLVEYTDALGKFLPDQDRPNEGVFSFQDDDEQWLSLRYDLTAPLARYVAENFETLPKPYRSYRNGWVFRNEKPGPGRFRQFMQFDADTVGAPNVSADAEMCMMMADTLERLGIQRGDYAIRVNNRKVLDGVLDAIGLEGEGNAAKRLNVLRAIDKLDKFGPEGVRLLLGKGRLDESGDFTKGAQLPEAAIEKVLAFTAAGGADGAQTIANLQAVVAGNAKGEEGVQELADMQALFFAGGYEGRVKIDPSVVRGLEYYTGPVFEAELLFDVTNEDGQKVVFGSVGGGGRYDGLVSRFRGEPVPATGFSIGVSRLMTALKNLGKLDVSDTVGPVVVLVMDKDTQNLGRYQKMVSDLRKAGIRAEMYVGGSGMKAQMKYADRRAAPCVVIQGSQEREAGEVQIKDLVEGKRLSAEIEDNVTWLESRPAQITVREDGLVDAVREILDAQARDRAEQSK</sequence>
<comment type="catalytic activity">
    <reaction evidence="1">
        <text>tRNA(His) + L-histidine + ATP = L-histidyl-tRNA(His) + AMP + diphosphate + H(+)</text>
        <dbReference type="Rhea" id="RHEA:17313"/>
        <dbReference type="Rhea" id="RHEA-COMP:9665"/>
        <dbReference type="Rhea" id="RHEA-COMP:9689"/>
        <dbReference type="ChEBI" id="CHEBI:15378"/>
        <dbReference type="ChEBI" id="CHEBI:30616"/>
        <dbReference type="ChEBI" id="CHEBI:33019"/>
        <dbReference type="ChEBI" id="CHEBI:57595"/>
        <dbReference type="ChEBI" id="CHEBI:78442"/>
        <dbReference type="ChEBI" id="CHEBI:78527"/>
        <dbReference type="ChEBI" id="CHEBI:456215"/>
        <dbReference type="EC" id="6.1.1.21"/>
    </reaction>
</comment>
<comment type="subunit">
    <text evidence="1">Homodimer.</text>
</comment>
<comment type="subcellular location">
    <subcellularLocation>
        <location evidence="1">Cytoplasm</location>
    </subcellularLocation>
</comment>
<comment type="similarity">
    <text evidence="1">Belongs to the class-II aminoacyl-tRNA synthetase family.</text>
</comment>
<proteinExistence type="inferred from homology"/>